<reference key="1">
    <citation type="journal article" date="1992" name="Plant Mol. Biol.">
        <title>Nucleotide sequence of a cDNA encoding a lipid transfer protein from wheat (Triticum durum Desf.).</title>
        <authorList>
            <person name="Dieryck W."/>
            <person name="Gautier M.-F."/>
            <person name="Lullien V."/>
            <person name="Joudrier P."/>
        </authorList>
    </citation>
    <scope>NUCLEOTIDE SEQUENCE [MRNA]</scope>
</reference>
<reference key="2">
    <citation type="journal article" date="1992" name="Biochim. Biophys. Acta">
        <title>Amino acid sequence of a non-specific wheat phospholipid transfer protein and its conformation as revealed by infrared and Raman spectroscopy. Role of disulfide bridges and phospholipids in the stabilization of the alpha-helix structure.</title>
        <authorList>
            <person name="Desormeaux A."/>
            <person name="Blochet J.-E."/>
            <person name="Pezolet M."/>
            <person name="Marion D."/>
        </authorList>
    </citation>
    <scope>PROTEIN SEQUENCE OF 25-113</scope>
    <source>
        <tissue>Seed</tissue>
    </source>
</reference>
<reference key="3">
    <citation type="journal article" date="2001" name="J. Agric. Food Chem.">
        <title>Identification of a new form of lipid transfer protein (LTP1) in wheat seeds.</title>
        <authorList>
            <person name="Douliez J.-P."/>
            <person name="Jegou S."/>
            <person name="Pato C."/>
            <person name="Larre C."/>
            <person name="Molle D."/>
            <person name="Marion D."/>
        </authorList>
    </citation>
    <scope>LIPIDATION AT ASP-30</scope>
    <scope>IDENTIFICATION BY MASS SPECTROMETRY</scope>
    <source>
        <tissue>Seed</tissue>
    </source>
</reference>
<reference key="4">
    <citation type="journal article" date="1991" name="Biochemistry">
        <title>Two- and three-dimensional 1H NMR studies of a wheat phospholipid transfer protein: sequential resonance assignments and secondary structure.</title>
        <authorList>
            <person name="Simorre J.-P."/>
            <person name="Caille A."/>
            <person name="Marion D."/>
            <person name="Marion D."/>
            <person name="Ptak M."/>
        </authorList>
    </citation>
    <scope>STRUCTURE BY NMR</scope>
    <source>
        <tissue>Seed</tissue>
    </source>
</reference>
<reference key="5">
    <citation type="journal article" date="1992" name="Biochimie">
        <title>Progress in multidimensional NMR investigations of peptide and protein 3-D structures in solution. From structure to functional aspects.</title>
        <authorList>
            <person name="Bonmatin J.-M."/>
            <person name="Genest M."/>
            <person name="Petit M.-C."/>
            <person name="Gincel E."/>
            <person name="Simorre J.-P."/>
            <person name="Cornet B."/>
            <person name="Gallet X."/>
            <person name="Caille A."/>
            <person name="Labbe H."/>
            <person name="Vovelle F."/>
            <person name="Ptak M."/>
        </authorList>
    </citation>
    <scope>STRUCTURE BY NMR</scope>
</reference>
<reference key="6">
    <citation type="journal article" date="1994" name="Eur. J. Biochem.">
        <title>Three-dimensional structure in solution of a wheat lipid-transfer protein from multidimensional 1H-NMR data. A new folding for lipid carriers.</title>
        <authorList>
            <person name="Gincel E."/>
            <person name="Simorre J.-P."/>
            <person name="Caille A."/>
            <person name="Marion D."/>
            <person name="Ptak M."/>
            <person name="Vovelle F."/>
        </authorList>
    </citation>
    <scope>STRUCTURE BY NMR</scope>
</reference>
<reference key="7">
    <citation type="journal article" date="1999" name="Eur. J. Biochem.">
        <title>The crystal structure of a wheat nonspecific lipid transfer protein (ns-LTP1) complexed with two molecules of phospholipid at 2.1-A resolution.</title>
        <authorList>
            <person name="Charvolin D."/>
            <person name="Douliez J.-P."/>
            <person name="Marion D."/>
            <person name="Cohen-Addad C."/>
            <person name="Pebay-Peyroula E."/>
        </authorList>
    </citation>
    <scope>X-RAY CRYSTALLOGRAPHY (2.10 ANGSTROMS)</scope>
    <scope>DISULFIDE BONDS</scope>
</reference>
<accession>P24296</accession>
<feature type="signal peptide" evidence="2">
    <location>
        <begin position="1" status="less than"/>
        <end position="24"/>
    </location>
</feature>
<feature type="chain" id="PRO_0000018414" description="Non-specific lipid-transfer protein">
    <location>
        <begin position="25"/>
        <end position="113"/>
    </location>
</feature>
<feature type="lipid moiety-binding region" description="Cis-14-hydroxy-10,13-dioxo-7-heptadecenoic acid aspartate ester" evidence="4">
    <location>
        <position position="30"/>
    </location>
</feature>
<feature type="disulfide bond" evidence="1 5">
    <location>
        <begin position="26"/>
        <end position="73"/>
    </location>
</feature>
<feature type="disulfide bond" evidence="1 5">
    <location>
        <begin position="36"/>
        <end position="50"/>
    </location>
</feature>
<feature type="disulfide bond" evidence="1 5">
    <location>
        <begin position="51"/>
        <end position="96"/>
    </location>
</feature>
<feature type="disulfide bond" evidence="1 5">
    <location>
        <begin position="71"/>
        <end position="110"/>
    </location>
</feature>
<feature type="non-terminal residue">
    <location>
        <position position="1"/>
    </location>
</feature>
<feature type="helix" evidence="6">
    <location>
        <begin position="26"/>
        <end position="33"/>
    </location>
</feature>
<feature type="helix" evidence="6">
    <location>
        <begin position="34"/>
        <end position="36"/>
    </location>
</feature>
<feature type="helix" evidence="6">
    <location>
        <begin position="37"/>
        <end position="40"/>
    </location>
</feature>
<feature type="helix" evidence="6">
    <location>
        <begin position="48"/>
        <end position="60"/>
    </location>
</feature>
<feature type="helix" evidence="6">
    <location>
        <begin position="64"/>
        <end position="78"/>
    </location>
</feature>
<feature type="helix" evidence="6">
    <location>
        <begin position="86"/>
        <end position="90"/>
    </location>
</feature>
<feature type="helix" evidence="6">
    <location>
        <begin position="92"/>
        <end position="96"/>
    </location>
</feature>
<feature type="strand" evidence="7">
    <location>
        <begin position="105"/>
        <end position="108"/>
    </location>
</feature>
<feature type="helix" evidence="6">
    <location>
        <begin position="110"/>
        <end position="112"/>
    </location>
</feature>
<comment type="function">
    <text>Plant non-specific lipid-transfer proteins transfer phospholipids as well as galactolipids across membranes. May play a role in wax or cutin deposition in the cell walls of expanding epidermal cells and certain secretory tissues.</text>
</comment>
<comment type="similarity">
    <text evidence="3">Belongs to the plant LTP family.</text>
</comment>
<organism>
    <name type="scientific">Triticum aestivum</name>
    <name type="common">Wheat</name>
    <dbReference type="NCBI Taxonomy" id="4565"/>
    <lineage>
        <taxon>Eukaryota</taxon>
        <taxon>Viridiplantae</taxon>
        <taxon>Streptophyta</taxon>
        <taxon>Embryophyta</taxon>
        <taxon>Tracheophyta</taxon>
        <taxon>Spermatophyta</taxon>
        <taxon>Magnoliopsida</taxon>
        <taxon>Liliopsida</taxon>
        <taxon>Poales</taxon>
        <taxon>Poaceae</taxon>
        <taxon>BOP clade</taxon>
        <taxon>Pooideae</taxon>
        <taxon>Triticodae</taxon>
        <taxon>Triticeae</taxon>
        <taxon>Triticinae</taxon>
        <taxon>Triticum</taxon>
    </lineage>
</organism>
<protein>
    <recommendedName>
        <fullName>Non-specific lipid-transfer protein</fullName>
        <shortName>LTP</shortName>
    </recommendedName>
    <alternativeName>
        <fullName>Phospholipid transfer protein</fullName>
        <shortName>PLTP</shortName>
    </alternativeName>
    <alternativeName>
        <fullName>ns-LTP1</fullName>
    </alternativeName>
</protein>
<proteinExistence type="evidence at protein level"/>
<name>NLTP1_WHEAT</name>
<sequence length="113" mass="11899">AQVMLMAVALVLMLAAVPRAAVAIDCGHVDSLVRPCLSYVQGGPGPSGQCCDGVKNLHNQARSQSDRQSACNCLKGIARGIHNLNEDNARSIPPKCGVNLPYTISLNIDCSRV</sequence>
<evidence type="ECO:0000269" key="1">
    <source>
    </source>
</evidence>
<evidence type="ECO:0000269" key="2">
    <source>
    </source>
</evidence>
<evidence type="ECO:0000305" key="3"/>
<evidence type="ECO:0000305" key="4">
    <source>
    </source>
</evidence>
<evidence type="ECO:0007744" key="5">
    <source>
        <dbReference type="PDB" id="1BWO"/>
    </source>
</evidence>
<evidence type="ECO:0007829" key="6">
    <source>
        <dbReference type="PDB" id="1BWO"/>
    </source>
</evidence>
<evidence type="ECO:0007829" key="7">
    <source>
        <dbReference type="PDB" id="1CZ2"/>
    </source>
</evidence>
<dbReference type="EMBL" id="X63669">
    <property type="protein sequence ID" value="CAA45210.1"/>
    <property type="molecule type" value="mRNA"/>
</dbReference>
<dbReference type="PIR" id="S21757">
    <property type="entry name" value="S21757"/>
</dbReference>
<dbReference type="PDB" id="1BWO">
    <property type="method" value="X-ray"/>
    <property type="resolution" value="2.10 A"/>
    <property type="chains" value="A/B=24-113"/>
</dbReference>
<dbReference type="PDB" id="1CZ2">
    <property type="method" value="NMR"/>
    <property type="chains" value="A=24-113"/>
</dbReference>
<dbReference type="PDB" id="1GH1">
    <property type="method" value="NMR"/>
    <property type="chains" value="A=24-113"/>
</dbReference>
<dbReference type="PDBsum" id="1BWO"/>
<dbReference type="PDBsum" id="1CZ2"/>
<dbReference type="PDBsum" id="1GH1"/>
<dbReference type="BMRB" id="P24296"/>
<dbReference type="SMR" id="P24296"/>
<dbReference type="STRING" id="4565.P24296"/>
<dbReference type="Allergome" id="1059">
    <property type="allergen name" value="Tri a 14"/>
</dbReference>
<dbReference type="PaxDb" id="4565-Traes_5BL_628390692.1"/>
<dbReference type="eggNOG" id="ENOG502S4CI">
    <property type="taxonomic scope" value="Eukaryota"/>
</dbReference>
<dbReference type="EvolutionaryTrace" id="P24296"/>
<dbReference type="Proteomes" id="UP000019116">
    <property type="component" value="Unplaced"/>
</dbReference>
<dbReference type="ExpressionAtlas" id="P24296">
    <property type="expression patterns" value="baseline and differential"/>
</dbReference>
<dbReference type="GO" id="GO:0008289">
    <property type="term" value="F:lipid binding"/>
    <property type="evidence" value="ECO:0007669"/>
    <property type="project" value="UniProtKB-KW"/>
</dbReference>
<dbReference type="GO" id="GO:0006869">
    <property type="term" value="P:lipid transport"/>
    <property type="evidence" value="ECO:0007669"/>
    <property type="project" value="InterPro"/>
</dbReference>
<dbReference type="CDD" id="cd01960">
    <property type="entry name" value="nsLTP1"/>
    <property type="match status" value="1"/>
</dbReference>
<dbReference type="Gene3D" id="1.10.110.10">
    <property type="entry name" value="Plant lipid-transfer and hydrophobic proteins"/>
    <property type="match status" value="1"/>
</dbReference>
<dbReference type="InterPro" id="IPR036312">
    <property type="entry name" value="Bifun_inhib/LTP/seed_sf"/>
</dbReference>
<dbReference type="InterPro" id="IPR016140">
    <property type="entry name" value="Bifunc_inhib/LTP/seed_store"/>
</dbReference>
<dbReference type="InterPro" id="IPR000528">
    <property type="entry name" value="Plant_nsLTP"/>
</dbReference>
<dbReference type="PANTHER" id="PTHR33076">
    <property type="entry name" value="NON-SPECIFIC LIPID-TRANSFER PROTEIN 2-RELATED"/>
    <property type="match status" value="1"/>
</dbReference>
<dbReference type="Pfam" id="PF00234">
    <property type="entry name" value="Tryp_alpha_amyl"/>
    <property type="match status" value="1"/>
</dbReference>
<dbReference type="PRINTS" id="PR00382">
    <property type="entry name" value="LIPIDTRNSFER"/>
</dbReference>
<dbReference type="SMART" id="SM00499">
    <property type="entry name" value="AAI"/>
    <property type="match status" value="1"/>
</dbReference>
<dbReference type="SUPFAM" id="SSF47699">
    <property type="entry name" value="Bifunctional inhibitor/lipid-transfer protein/seed storage 2S albumin"/>
    <property type="match status" value="1"/>
</dbReference>
<dbReference type="PROSITE" id="PS00597">
    <property type="entry name" value="PLANT_LTP"/>
    <property type="match status" value="1"/>
</dbReference>
<keyword id="KW-0002">3D-structure</keyword>
<keyword id="KW-0903">Direct protein sequencing</keyword>
<keyword id="KW-1015">Disulfide bond</keyword>
<keyword id="KW-0446">Lipid-binding</keyword>
<keyword id="KW-0449">Lipoprotein</keyword>
<keyword id="KW-1185">Reference proteome</keyword>
<keyword id="KW-0732">Signal</keyword>
<keyword id="KW-0813">Transport</keyword>